<protein>
    <recommendedName>
        <fullName>Altered inheritance of mitochondria protein 4</fullName>
    </recommendedName>
    <alternativeName>
        <fullName>Synthetic with old yellow enzyme protein 1</fullName>
    </alternativeName>
</protein>
<dbReference type="EMBL" id="CH408048">
    <property type="protein sequence ID" value="EDV11921.1"/>
    <property type="molecule type" value="Genomic_DNA"/>
</dbReference>
<dbReference type="SMR" id="B3LMW8"/>
<dbReference type="HOGENOM" id="CLU_2016514_0_0_1"/>
<dbReference type="OrthoDB" id="13632at4893"/>
<dbReference type="Proteomes" id="UP000008335">
    <property type="component" value="Unassembled WGS sequence"/>
</dbReference>
<dbReference type="GO" id="GO:0005737">
    <property type="term" value="C:cytoplasm"/>
    <property type="evidence" value="ECO:0007669"/>
    <property type="project" value="UniProtKB-SubCell"/>
</dbReference>
<dbReference type="Pfam" id="PF12622">
    <property type="entry name" value="NpwBP"/>
    <property type="match status" value="1"/>
</dbReference>
<proteinExistence type="inferred from homology"/>
<gene>
    <name type="primary">AIM4</name>
    <name type="synonym">SOY1</name>
    <name type="ORF">SCRG_02777</name>
</gene>
<name>AIM4_YEAS1</name>
<comment type="subunit">
    <text evidence="1">May interact with the nuclear pore complex.</text>
</comment>
<comment type="subcellular location">
    <subcellularLocation>
        <location evidence="1">Cytoplasm</location>
    </subcellularLocation>
</comment>
<comment type="similarity">
    <text evidence="3">Belongs to the AIM4 family.</text>
</comment>
<evidence type="ECO:0000250" key="1"/>
<evidence type="ECO:0000256" key="2">
    <source>
        <dbReference type="SAM" id="MobiDB-lite"/>
    </source>
</evidence>
<evidence type="ECO:0000305" key="3"/>
<feature type="chain" id="PRO_0000399857" description="Altered inheritance of mitochondria protein 4">
    <location>
        <begin position="1"/>
        <end position="123"/>
    </location>
</feature>
<feature type="region of interest" description="Disordered" evidence="2">
    <location>
        <begin position="1"/>
        <end position="42"/>
    </location>
</feature>
<feature type="compositionally biased region" description="Basic and acidic residues" evidence="2">
    <location>
        <begin position="1"/>
        <end position="16"/>
    </location>
</feature>
<feature type="compositionally biased region" description="Basic residues" evidence="2">
    <location>
        <begin position="17"/>
        <end position="28"/>
    </location>
</feature>
<keyword id="KW-0963">Cytoplasm</keyword>
<organism>
    <name type="scientific">Saccharomyces cerevisiae (strain RM11-1a)</name>
    <name type="common">Baker's yeast</name>
    <dbReference type="NCBI Taxonomy" id="285006"/>
    <lineage>
        <taxon>Eukaryota</taxon>
        <taxon>Fungi</taxon>
        <taxon>Dikarya</taxon>
        <taxon>Ascomycota</taxon>
        <taxon>Saccharomycotina</taxon>
        <taxon>Saccharomycetes</taxon>
        <taxon>Saccharomycetales</taxon>
        <taxon>Saccharomycetaceae</taxon>
        <taxon>Saccharomyces</taxon>
    </lineage>
</organism>
<accession>B3LMW8</accession>
<reference key="1">
    <citation type="submission" date="2005-03" db="EMBL/GenBank/DDBJ databases">
        <title>Annotation of the Saccharomyces cerevisiae RM11-1a genome.</title>
        <authorList>
            <consortium name="The Broad Institute Genome Sequencing Platform"/>
            <person name="Birren B.W."/>
            <person name="Lander E.S."/>
            <person name="Galagan J.E."/>
            <person name="Nusbaum C."/>
            <person name="Devon K."/>
            <person name="Cuomo C."/>
            <person name="Jaffe D.B."/>
            <person name="Butler J."/>
            <person name="Alvarez P."/>
            <person name="Gnerre S."/>
            <person name="Grabherr M."/>
            <person name="Kleber M."/>
            <person name="Mauceli E.W."/>
            <person name="Brockman W."/>
            <person name="MacCallum I.A."/>
            <person name="Rounsley S."/>
            <person name="Young S.K."/>
            <person name="LaButti K."/>
            <person name="Pushparaj V."/>
            <person name="DeCaprio D."/>
            <person name="Crawford M."/>
            <person name="Koehrsen M."/>
            <person name="Engels R."/>
            <person name="Montgomery P."/>
            <person name="Pearson M."/>
            <person name="Howarth C."/>
            <person name="Larson L."/>
            <person name="Luoma S."/>
            <person name="White J."/>
            <person name="O'Leary S."/>
            <person name="Kodira C.D."/>
            <person name="Zeng Q."/>
            <person name="Yandava C."/>
            <person name="Alvarado L."/>
            <person name="Pratt S."/>
            <person name="Kruglyak L."/>
        </authorList>
    </citation>
    <scope>NUCLEOTIDE SEQUENCE [LARGE SCALE GENOMIC DNA]</scope>
    <source>
        <strain>RM11-1a</strain>
    </source>
</reference>
<sequence length="123" mass="14262">MDRKKDPSNNLTERRVSKVQRPNKKKVRNQVESLSRNLERNKEGQLLQTVSKGHLEADSGHSLGREKENGELGIRSIFYDKDWNPRGTAPSHYRNIPYNPATFKRRTEVQARLGNLENIKIPK</sequence>